<comment type="function">
    <text evidence="1">The heterodimer acts as both an ATP-dependent DNA helicase and an ATP-dependent, dual-direction single-stranded exonuclease. Recognizes the chi site generating a DNA molecule suitable for the initiation of homologous recombination. The AddB subunit has 5' -&gt; 3' nuclease activity but not helicase activity.</text>
</comment>
<comment type="cofactor">
    <cofactor evidence="1">
        <name>Mg(2+)</name>
        <dbReference type="ChEBI" id="CHEBI:18420"/>
    </cofactor>
</comment>
<comment type="cofactor">
    <cofactor evidence="1">
        <name>[4Fe-4S] cluster</name>
        <dbReference type="ChEBI" id="CHEBI:49883"/>
    </cofactor>
    <text evidence="1">Binds 1 [4Fe-4S] cluster.</text>
</comment>
<comment type="subunit">
    <text evidence="1">Heterodimer of AddA and AddB.</text>
</comment>
<comment type="miscellaneous">
    <text evidence="1">Despite having conserved helicase domains, this subunit does not have helicase activity.</text>
</comment>
<comment type="similarity">
    <text evidence="1">Belongs to the helicase family. AddB/RexB type 1 subfamily.</text>
</comment>
<evidence type="ECO:0000255" key="1">
    <source>
        <dbReference type="HAMAP-Rule" id="MF_01452"/>
    </source>
</evidence>
<evidence type="ECO:0000256" key="2">
    <source>
        <dbReference type="SAM" id="MobiDB-lite"/>
    </source>
</evidence>
<feature type="chain" id="PRO_0000379187" description="ATP-dependent helicase/deoxyribonuclease subunit B">
    <location>
        <begin position="1"/>
        <end position="1220"/>
    </location>
</feature>
<feature type="domain" description="UvrD-like helicase ATP-binding" evidence="1">
    <location>
        <begin position="1"/>
        <end position="281"/>
    </location>
</feature>
<feature type="domain" description="UvrD-like helicase C-terminal" evidence="1">
    <location>
        <begin position="283"/>
        <end position="590"/>
    </location>
</feature>
<feature type="region of interest" description="Disordered" evidence="2">
    <location>
        <begin position="989"/>
        <end position="1008"/>
    </location>
</feature>
<feature type="region of interest" description="Disordered" evidence="2">
    <location>
        <begin position="1162"/>
        <end position="1220"/>
    </location>
</feature>
<feature type="compositionally biased region" description="Polar residues" evidence="2">
    <location>
        <begin position="1162"/>
        <end position="1171"/>
    </location>
</feature>
<feature type="compositionally biased region" description="Basic and acidic residues" evidence="2">
    <location>
        <begin position="1211"/>
        <end position="1220"/>
    </location>
</feature>
<feature type="binding site" evidence="1">
    <location>
        <begin position="8"/>
        <end position="15"/>
    </location>
    <ligand>
        <name>ATP</name>
        <dbReference type="ChEBI" id="CHEBI:30616"/>
    </ligand>
</feature>
<feature type="binding site" evidence="1">
    <location>
        <position position="788"/>
    </location>
    <ligand>
        <name>[4Fe-4S] cluster</name>
        <dbReference type="ChEBI" id="CHEBI:49883"/>
    </ligand>
</feature>
<feature type="binding site" evidence="1">
    <location>
        <position position="1128"/>
    </location>
    <ligand>
        <name>[4Fe-4S] cluster</name>
        <dbReference type="ChEBI" id="CHEBI:49883"/>
    </ligand>
</feature>
<feature type="binding site" evidence="1">
    <location>
        <position position="1131"/>
    </location>
    <ligand>
        <name>[4Fe-4S] cluster</name>
        <dbReference type="ChEBI" id="CHEBI:49883"/>
    </ligand>
</feature>
<feature type="binding site" evidence="1">
    <location>
        <position position="1137"/>
    </location>
    <ligand>
        <name>[4Fe-4S] cluster</name>
        <dbReference type="ChEBI" id="CHEBI:49883"/>
    </ligand>
</feature>
<reference key="1">
    <citation type="journal article" date="2006" name="J. Bacteriol.">
        <title>Complete genome sequence of the dehalorespiring bacterium Desulfitobacterium hafniense Y51 and comparison with Dehalococcoides ethenogenes 195.</title>
        <authorList>
            <person name="Nonaka H."/>
            <person name="Keresztes G."/>
            <person name="Shinoda Y."/>
            <person name="Ikenaga Y."/>
            <person name="Abe M."/>
            <person name="Naito K."/>
            <person name="Inatomi K."/>
            <person name="Furukawa K."/>
            <person name="Inui M."/>
            <person name="Yukawa H."/>
        </authorList>
    </citation>
    <scope>NUCLEOTIDE SEQUENCE [LARGE SCALE GENOMIC DNA]</scope>
    <source>
        <strain>Y51</strain>
    </source>
</reference>
<keyword id="KW-0004">4Fe-4S</keyword>
<keyword id="KW-0067">ATP-binding</keyword>
<keyword id="KW-0227">DNA damage</keyword>
<keyword id="KW-0234">DNA repair</keyword>
<keyword id="KW-0238">DNA-binding</keyword>
<keyword id="KW-0269">Exonuclease</keyword>
<keyword id="KW-0347">Helicase</keyword>
<keyword id="KW-0378">Hydrolase</keyword>
<keyword id="KW-0408">Iron</keyword>
<keyword id="KW-0411">Iron-sulfur</keyword>
<keyword id="KW-0479">Metal-binding</keyword>
<keyword id="KW-0540">Nuclease</keyword>
<keyword id="KW-0547">Nucleotide-binding</keyword>
<keyword id="KW-1185">Reference proteome</keyword>
<dbReference type="EC" id="3.1.-.-" evidence="1"/>
<dbReference type="EMBL" id="AP008230">
    <property type="protein sequence ID" value="BAE83475.1"/>
    <property type="molecule type" value="Genomic_DNA"/>
</dbReference>
<dbReference type="SMR" id="Q24WW7"/>
<dbReference type="STRING" id="138119.DSY1686"/>
<dbReference type="KEGG" id="dsy:DSY1686"/>
<dbReference type="eggNOG" id="COG3857">
    <property type="taxonomic scope" value="Bacteria"/>
</dbReference>
<dbReference type="HOGENOM" id="CLU_007838_0_0_9"/>
<dbReference type="Proteomes" id="UP000001946">
    <property type="component" value="Chromosome"/>
</dbReference>
<dbReference type="GO" id="GO:0051539">
    <property type="term" value="F:4 iron, 4 sulfur cluster binding"/>
    <property type="evidence" value="ECO:0007669"/>
    <property type="project" value="UniProtKB-KW"/>
</dbReference>
<dbReference type="GO" id="GO:0008409">
    <property type="term" value="F:5'-3' exonuclease activity"/>
    <property type="evidence" value="ECO:0007669"/>
    <property type="project" value="UniProtKB-UniRule"/>
</dbReference>
<dbReference type="GO" id="GO:0005524">
    <property type="term" value="F:ATP binding"/>
    <property type="evidence" value="ECO:0007669"/>
    <property type="project" value="UniProtKB-UniRule"/>
</dbReference>
<dbReference type="GO" id="GO:0003690">
    <property type="term" value="F:double-stranded DNA binding"/>
    <property type="evidence" value="ECO:0007669"/>
    <property type="project" value="UniProtKB-UniRule"/>
</dbReference>
<dbReference type="GO" id="GO:0004386">
    <property type="term" value="F:helicase activity"/>
    <property type="evidence" value="ECO:0007669"/>
    <property type="project" value="UniProtKB-KW"/>
</dbReference>
<dbReference type="GO" id="GO:0046872">
    <property type="term" value="F:metal ion binding"/>
    <property type="evidence" value="ECO:0007669"/>
    <property type="project" value="UniProtKB-KW"/>
</dbReference>
<dbReference type="GO" id="GO:0000724">
    <property type="term" value="P:double-strand break repair via homologous recombination"/>
    <property type="evidence" value="ECO:0007669"/>
    <property type="project" value="UniProtKB-UniRule"/>
</dbReference>
<dbReference type="Gene3D" id="3.40.50.300">
    <property type="entry name" value="P-loop containing nucleotide triphosphate hydrolases"/>
    <property type="match status" value="4"/>
</dbReference>
<dbReference type="HAMAP" id="MF_01452">
    <property type="entry name" value="AddB_type1"/>
    <property type="match status" value="1"/>
</dbReference>
<dbReference type="InterPro" id="IPR049035">
    <property type="entry name" value="ADDB_N"/>
</dbReference>
<dbReference type="InterPro" id="IPR014140">
    <property type="entry name" value="DNA_helicase_suAddB"/>
</dbReference>
<dbReference type="InterPro" id="IPR014017">
    <property type="entry name" value="DNA_helicase_UvrD-like_C"/>
</dbReference>
<dbReference type="InterPro" id="IPR027417">
    <property type="entry name" value="P-loop_NTPase"/>
</dbReference>
<dbReference type="InterPro" id="IPR038726">
    <property type="entry name" value="PDDEXK_AddAB-type"/>
</dbReference>
<dbReference type="NCBIfam" id="TIGR02773">
    <property type="entry name" value="addB_Gpos"/>
    <property type="match status" value="1"/>
</dbReference>
<dbReference type="PANTHER" id="PTHR30591">
    <property type="entry name" value="RECBCD ENZYME SUBUNIT RECC"/>
    <property type="match status" value="1"/>
</dbReference>
<dbReference type="PANTHER" id="PTHR30591:SF1">
    <property type="entry name" value="RECBCD ENZYME SUBUNIT RECC"/>
    <property type="match status" value="1"/>
</dbReference>
<dbReference type="Pfam" id="PF21445">
    <property type="entry name" value="ADDB_N"/>
    <property type="match status" value="1"/>
</dbReference>
<dbReference type="Pfam" id="PF12705">
    <property type="entry name" value="PDDEXK_1"/>
    <property type="match status" value="1"/>
</dbReference>
<dbReference type="Pfam" id="PF13361">
    <property type="entry name" value="UvrD_C"/>
    <property type="match status" value="1"/>
</dbReference>
<dbReference type="SUPFAM" id="SSF52540">
    <property type="entry name" value="P-loop containing nucleoside triphosphate hydrolases"/>
    <property type="match status" value="1"/>
</dbReference>
<dbReference type="PROSITE" id="PS51198">
    <property type="entry name" value="UVRD_HELICASE_ATP_BIND"/>
    <property type="match status" value="1"/>
</dbReference>
<dbReference type="PROSITE" id="PS51217">
    <property type="entry name" value="UVRD_HELICASE_CTER"/>
    <property type="match status" value="1"/>
</dbReference>
<sequence length="1220" mass="137379">MSMRFIVGRAGTGKSTLCRQEIHKESQEHPEGLPLILLVPEQATHQMEMSLAHDPQSGGILRAQVLSFRRLGWRVFSEVGGGGKAVIGEVGKRMLLRRLLLNHRSDLRVFARSATRPGMADLLAQAIAEFKIYRITPDQLRGIEDADELLLQKTHELAFLYEELNKSLGTAARDPDDELNLVAGKISQAPFLQGAKIWVDGFKGFTPQELYVIQAMLGTAAEITVSLPLDPELLKAGTPRFKPGEELFYEPRQTYQGLVDLAREAKASISHVFLTETHRFEKAGLKHLERFYNAYPTQTFPGGDDSTAPDPLGIALFPAANKRAEVEGVARELRRLAREEGRTWRDCSVVTRDLPGYQGIIEQVFNAHEIPYFLDHKRPVIHHPLLELLLSAIETVQKDWAYEPLFRCLKTDFFPCSKDRIDRLENYCLAYGIHGSAWKGNRSWSYYPDPNHKEETAGLNETRQIIYDLFSPFDQAIRPHPEAGGPSVTVAQITEAIYELLIRLKVPEHLQEWAEAAHSRGDLAEAQLQNQIWDAVIQVLDELVAGLGEEVMDLSDFAMILTSGLENLQLGLIPPGYDQVLVGSLDRSRNPETAVLFLLGANDGILPGKPSDEGVFDELERLRLESKGIMLAPKGKVQVYEEQYFIYTALTRAREQLYISYPLTDEEGRGLTVSPVIHRLKMIFPGLPEKYLSLDEEEPGALPHPYALLPAYALHLQKLRQGSSLSPLWQAIRLWFLSQTAAFPQVQLLEKGLRDQNEEGKLPQPLARQLYGKRLVTSVSRLELFARCPFAHFAQYGLKLKERSNYRLSPPDMGQFFHAVLHDYAIALRERGLDWGELSKEQSWQLVNETAEPIALQLQNKILLSNARYRYLTHKLKRTVHHAVRVLGEHARQGVFLPMELEVKFGPQEALPPLEVPLSGGNSLLLRGQIDRIDGAVLGHEIYLRIFDYKSREAHVSLNQIYHGLDLQLLAYLDAALQGAQILVSSSGLAEGSKGSEGSEGSEDSEDSTIHPAGFLYFPVLEPQLKSKTLLYPEQLEKDRIKAVKVKGYLLADRQVLLAMDRDLENSSLLGIKLTKSGEFKKGSPILTEEQFALLRKHLQHFLRCSGEALLEGDISITPYRQGKHTACQFCSYKPLCHFDPYLPENNYRNLPVIQDEEFWQRVQSQDSEQYPEQHPPTSVPGETSRRALQKDGGNSPRGQELIWLGEDEAGAGKEDDGHE</sequence>
<proteinExistence type="inferred from homology"/>
<name>ADDB_DESHY</name>
<gene>
    <name evidence="1" type="primary">addB</name>
    <name type="ordered locus">DSY1686</name>
</gene>
<protein>
    <recommendedName>
        <fullName evidence="1">ATP-dependent helicase/deoxyribonuclease subunit B</fullName>
        <ecNumber evidence="1">3.1.-.-</ecNumber>
    </recommendedName>
    <alternativeName>
        <fullName evidence="1">ATP-dependent helicase/nuclease subunit AddB</fullName>
    </alternativeName>
</protein>
<organism>
    <name type="scientific">Desulfitobacterium hafniense (strain Y51)</name>
    <dbReference type="NCBI Taxonomy" id="138119"/>
    <lineage>
        <taxon>Bacteria</taxon>
        <taxon>Bacillati</taxon>
        <taxon>Bacillota</taxon>
        <taxon>Clostridia</taxon>
        <taxon>Eubacteriales</taxon>
        <taxon>Desulfitobacteriaceae</taxon>
        <taxon>Desulfitobacterium</taxon>
    </lineage>
</organism>
<accession>Q24WW7</accession>